<reference key="1">
    <citation type="submission" date="2006-01" db="EMBL/GenBank/DDBJ databases">
        <title>Mrb1, a meiosis-specific RNA binding protein, is essential for meiotic progression and forms a nuclear foci that resembles the Mei2 dot.</title>
        <authorList>
            <person name="Nojima H."/>
        </authorList>
    </citation>
    <scope>NUCLEOTIDE SEQUENCE [GENOMIC DNA]</scope>
    <scope>FUNCTION</scope>
</reference>
<reference key="2">
    <citation type="journal article" date="2002" name="Nature">
        <title>The genome sequence of Schizosaccharomyces pombe.</title>
        <authorList>
            <person name="Wood V."/>
            <person name="Gwilliam R."/>
            <person name="Rajandream M.A."/>
            <person name="Lyne M.H."/>
            <person name="Lyne R."/>
            <person name="Stewart A."/>
            <person name="Sgouros J.G."/>
            <person name="Peat N."/>
            <person name="Hayles J."/>
            <person name="Baker S.G."/>
            <person name="Basham D."/>
            <person name="Bowman S."/>
            <person name="Brooks K."/>
            <person name="Brown D."/>
            <person name="Brown S."/>
            <person name="Chillingworth T."/>
            <person name="Churcher C.M."/>
            <person name="Collins M."/>
            <person name="Connor R."/>
            <person name="Cronin A."/>
            <person name="Davis P."/>
            <person name="Feltwell T."/>
            <person name="Fraser A."/>
            <person name="Gentles S."/>
            <person name="Goble A."/>
            <person name="Hamlin N."/>
            <person name="Harris D.E."/>
            <person name="Hidalgo J."/>
            <person name="Hodgson G."/>
            <person name="Holroyd S."/>
            <person name="Hornsby T."/>
            <person name="Howarth S."/>
            <person name="Huckle E.J."/>
            <person name="Hunt S."/>
            <person name="Jagels K."/>
            <person name="James K.D."/>
            <person name="Jones L."/>
            <person name="Jones M."/>
            <person name="Leather S."/>
            <person name="McDonald S."/>
            <person name="McLean J."/>
            <person name="Mooney P."/>
            <person name="Moule S."/>
            <person name="Mungall K.L."/>
            <person name="Murphy L.D."/>
            <person name="Niblett D."/>
            <person name="Odell C."/>
            <person name="Oliver K."/>
            <person name="O'Neil S."/>
            <person name="Pearson D."/>
            <person name="Quail M.A."/>
            <person name="Rabbinowitsch E."/>
            <person name="Rutherford K.M."/>
            <person name="Rutter S."/>
            <person name="Saunders D."/>
            <person name="Seeger K."/>
            <person name="Sharp S."/>
            <person name="Skelton J."/>
            <person name="Simmonds M.N."/>
            <person name="Squares R."/>
            <person name="Squares S."/>
            <person name="Stevens K."/>
            <person name="Taylor K."/>
            <person name="Taylor R.G."/>
            <person name="Tivey A."/>
            <person name="Walsh S.V."/>
            <person name="Warren T."/>
            <person name="Whitehead S."/>
            <person name="Woodward J.R."/>
            <person name="Volckaert G."/>
            <person name="Aert R."/>
            <person name="Robben J."/>
            <person name="Grymonprez B."/>
            <person name="Weltjens I."/>
            <person name="Vanstreels E."/>
            <person name="Rieger M."/>
            <person name="Schaefer M."/>
            <person name="Mueller-Auer S."/>
            <person name="Gabel C."/>
            <person name="Fuchs M."/>
            <person name="Duesterhoeft A."/>
            <person name="Fritzc C."/>
            <person name="Holzer E."/>
            <person name="Moestl D."/>
            <person name="Hilbert H."/>
            <person name="Borzym K."/>
            <person name="Langer I."/>
            <person name="Beck A."/>
            <person name="Lehrach H."/>
            <person name="Reinhardt R."/>
            <person name="Pohl T.M."/>
            <person name="Eger P."/>
            <person name="Zimmermann W."/>
            <person name="Wedler H."/>
            <person name="Wambutt R."/>
            <person name="Purnelle B."/>
            <person name="Goffeau A."/>
            <person name="Cadieu E."/>
            <person name="Dreano S."/>
            <person name="Gloux S."/>
            <person name="Lelaure V."/>
            <person name="Mottier S."/>
            <person name="Galibert F."/>
            <person name="Aves S.J."/>
            <person name="Xiang Z."/>
            <person name="Hunt C."/>
            <person name="Moore K."/>
            <person name="Hurst S.M."/>
            <person name="Lucas M."/>
            <person name="Rochet M."/>
            <person name="Gaillardin C."/>
            <person name="Tallada V.A."/>
            <person name="Garzon A."/>
            <person name="Thode G."/>
            <person name="Daga R.R."/>
            <person name="Cruzado L."/>
            <person name="Jimenez J."/>
            <person name="Sanchez M."/>
            <person name="del Rey F."/>
            <person name="Benito J."/>
            <person name="Dominguez A."/>
            <person name="Revuelta J.L."/>
            <person name="Moreno S."/>
            <person name="Armstrong J."/>
            <person name="Forsburg S.L."/>
            <person name="Cerutti L."/>
            <person name="Lowe T."/>
            <person name="McCombie W.R."/>
            <person name="Paulsen I."/>
            <person name="Potashkin J."/>
            <person name="Shpakovski G.V."/>
            <person name="Ussery D."/>
            <person name="Barrell B.G."/>
            <person name="Nurse P."/>
        </authorList>
    </citation>
    <scope>NUCLEOTIDE SEQUENCE [LARGE SCALE GENOMIC DNA]</scope>
    <source>
        <strain>972 / ATCC 24843</strain>
    </source>
</reference>
<dbReference type="EMBL" id="AB248102">
    <property type="protein sequence ID" value="BAE78594.1"/>
    <property type="molecule type" value="Genomic_DNA"/>
</dbReference>
<dbReference type="EMBL" id="CU329670">
    <property type="protein sequence ID" value="CAA93555.1"/>
    <property type="molecule type" value="Genomic_DNA"/>
</dbReference>
<dbReference type="PIR" id="T38864">
    <property type="entry name" value="T38864"/>
</dbReference>
<dbReference type="RefSeq" id="NP_593687.1">
    <property type="nucleotide sequence ID" value="NM_001019119.2"/>
</dbReference>
<dbReference type="SMR" id="Q10238"/>
<dbReference type="BioGRID" id="279566">
    <property type="interactions" value="1"/>
</dbReference>
<dbReference type="FunCoup" id="Q10238">
    <property type="interactions" value="421"/>
</dbReference>
<dbReference type="STRING" id="284812.Q10238"/>
<dbReference type="PaxDb" id="4896-SPAC4G9.05.1"/>
<dbReference type="EnsemblFungi" id="SPAC4G9.05.1">
    <property type="protein sequence ID" value="SPAC4G9.05.1:pep"/>
    <property type="gene ID" value="SPAC4G9.05"/>
</dbReference>
<dbReference type="PomBase" id="SPAC4G9.05">
    <property type="gene designation" value="mpf1"/>
</dbReference>
<dbReference type="VEuPathDB" id="FungiDB:SPAC4G9.05"/>
<dbReference type="eggNOG" id="KOG1488">
    <property type="taxonomic scope" value="Eukaryota"/>
</dbReference>
<dbReference type="HOGENOM" id="CLU_475795_0_0_1"/>
<dbReference type="InParanoid" id="Q10238"/>
<dbReference type="OMA" id="QTIFENC"/>
<dbReference type="PhylomeDB" id="Q10238"/>
<dbReference type="PRO" id="PR:Q10238"/>
<dbReference type="Proteomes" id="UP000002485">
    <property type="component" value="Chromosome I"/>
</dbReference>
<dbReference type="GO" id="GO:0005737">
    <property type="term" value="C:cytoplasm"/>
    <property type="evidence" value="ECO:0007005"/>
    <property type="project" value="PomBase"/>
</dbReference>
<dbReference type="GO" id="GO:0003730">
    <property type="term" value="F:mRNA 3'-UTR binding"/>
    <property type="evidence" value="ECO:0000318"/>
    <property type="project" value="GO_Central"/>
</dbReference>
<dbReference type="GO" id="GO:0051321">
    <property type="term" value="P:meiotic cell cycle"/>
    <property type="evidence" value="ECO:0007669"/>
    <property type="project" value="UniProtKB-KW"/>
</dbReference>
<dbReference type="GO" id="GO:0000288">
    <property type="term" value="P:nuclear-transcribed mRNA catabolic process, deadenylation-dependent decay"/>
    <property type="evidence" value="ECO:0000266"/>
    <property type="project" value="PomBase"/>
</dbReference>
<dbReference type="GO" id="GO:0010608">
    <property type="term" value="P:post-transcriptional regulation of gene expression"/>
    <property type="evidence" value="ECO:0000318"/>
    <property type="project" value="GO_Central"/>
</dbReference>
<dbReference type="CDD" id="cd07920">
    <property type="entry name" value="Pumilio"/>
    <property type="match status" value="1"/>
</dbReference>
<dbReference type="FunFam" id="1.25.10.10:FF:001564">
    <property type="entry name" value="Meiotic PUF family protein 1"/>
    <property type="match status" value="1"/>
</dbReference>
<dbReference type="Gene3D" id="1.25.10.10">
    <property type="entry name" value="Leucine-rich Repeat Variant"/>
    <property type="match status" value="1"/>
</dbReference>
<dbReference type="InterPro" id="IPR011989">
    <property type="entry name" value="ARM-like"/>
</dbReference>
<dbReference type="InterPro" id="IPR016024">
    <property type="entry name" value="ARM-type_fold"/>
</dbReference>
<dbReference type="InterPro" id="IPR033133">
    <property type="entry name" value="PUM-HD"/>
</dbReference>
<dbReference type="InterPro" id="IPR033712">
    <property type="entry name" value="Pumilio_RNA-bd"/>
</dbReference>
<dbReference type="InterPro" id="IPR001313">
    <property type="entry name" value="Pumilio_RNA-bd_rpt"/>
</dbReference>
<dbReference type="PANTHER" id="PTHR12537:SF189">
    <property type="entry name" value="MEIOTIC PUF FAMILY PROTEIN 1"/>
    <property type="match status" value="1"/>
</dbReference>
<dbReference type="PANTHER" id="PTHR12537">
    <property type="entry name" value="RNA BINDING PROTEIN PUMILIO-RELATED"/>
    <property type="match status" value="1"/>
</dbReference>
<dbReference type="Pfam" id="PF00806">
    <property type="entry name" value="PUF"/>
    <property type="match status" value="7"/>
</dbReference>
<dbReference type="SMART" id="SM00025">
    <property type="entry name" value="Pumilio"/>
    <property type="match status" value="7"/>
</dbReference>
<dbReference type="SUPFAM" id="SSF48371">
    <property type="entry name" value="ARM repeat"/>
    <property type="match status" value="1"/>
</dbReference>
<dbReference type="PROSITE" id="PS50302">
    <property type="entry name" value="PUM"/>
    <property type="match status" value="8"/>
</dbReference>
<dbReference type="PROSITE" id="PS50303">
    <property type="entry name" value="PUM_HD"/>
    <property type="match status" value="1"/>
</dbReference>
<evidence type="ECO:0000255" key="1">
    <source>
        <dbReference type="PROSITE-ProRule" id="PRU00318"/>
    </source>
</evidence>
<evidence type="ECO:0000269" key="2">
    <source ref="1"/>
</evidence>
<proteinExistence type="predicted"/>
<comment type="function">
    <text evidence="2">RNA-binding protein essential for meiotic progression.</text>
</comment>
<protein>
    <recommendedName>
        <fullName>Meiotic PUF family protein 1</fullName>
    </recommendedName>
</protein>
<gene>
    <name type="primary">mpf1</name>
    <name type="ORF">SPAC4G9.05</name>
</gene>
<feature type="chain" id="PRO_0000075936" description="Meiotic PUF family protein 1">
    <location>
        <begin position="1"/>
        <end position="581"/>
    </location>
</feature>
<feature type="domain" description="PUM-HD" evidence="1">
    <location>
        <begin position="225"/>
        <end position="580"/>
    </location>
</feature>
<feature type="repeat" description="Pumilio 1">
    <location>
        <begin position="291"/>
        <end position="326"/>
    </location>
</feature>
<feature type="repeat" description="Pumilio 2">
    <location>
        <begin position="327"/>
        <end position="362"/>
    </location>
</feature>
<feature type="repeat" description="Pumilio 3">
    <location>
        <begin position="363"/>
        <end position="398"/>
    </location>
</feature>
<feature type="repeat" description="Pumilio 4">
    <location>
        <begin position="403"/>
        <end position="438"/>
    </location>
</feature>
<feature type="repeat" description="Pumilio 5">
    <location>
        <begin position="439"/>
        <end position="474"/>
    </location>
</feature>
<feature type="repeat" description="Pumilio 6">
    <location>
        <begin position="475"/>
        <end position="510"/>
    </location>
</feature>
<feature type="repeat" description="Pumilio 7">
    <location>
        <begin position="518"/>
        <end position="554"/>
    </location>
</feature>
<feature type="repeat" description="Pumilio 8">
    <location>
        <begin position="555"/>
        <end position="581"/>
    </location>
</feature>
<name>MPF1_SCHPO</name>
<accession>Q10238</accession>
<accession>Q2L4W5</accession>
<organism>
    <name type="scientific">Schizosaccharomyces pombe (strain 972 / ATCC 24843)</name>
    <name type="common">Fission yeast</name>
    <dbReference type="NCBI Taxonomy" id="284812"/>
    <lineage>
        <taxon>Eukaryota</taxon>
        <taxon>Fungi</taxon>
        <taxon>Dikarya</taxon>
        <taxon>Ascomycota</taxon>
        <taxon>Taphrinomycotina</taxon>
        <taxon>Schizosaccharomycetes</taxon>
        <taxon>Schizosaccharomycetales</taxon>
        <taxon>Schizosaccharomycetaceae</taxon>
        <taxon>Schizosaccharomyces</taxon>
    </lineage>
</organism>
<keyword id="KW-0469">Meiosis</keyword>
<keyword id="KW-1185">Reference proteome</keyword>
<keyword id="KW-0677">Repeat</keyword>
<keyword id="KW-0694">RNA-binding</keyword>
<sequence length="581" mass="66866">MQRDEERPIDFGMSLELPKTPNDVNYVKKLITQILYLQTLVSEQQKKIESSTLEVQKKKDQIRELERIYEMNPKSFLTLRRTPALKLLPETLSVELSNEVNLTSSTTSSCVKPSPYLTNCNLKNKDTFPVSKNNCSLSSGIFTNSNGTNNCFSTHPKSLDDAKDNVVPKKLNDTDQFPLWSKNETIDPIDLGYSFISPFSMSFASKGNEILDPGESTNKNLFYEFPNGTTEPFEKNSVHSGKETLQYSATISKWKAMIEQIIFQNDQAASLSLQQQLKNEDIEDNINLINTILPFSVTLMKNKFGNFLIQKCFEYSTEAQLQSFSYFLKKHVKELSIDAFGSHVLQKSLEIYPERFTNNLIEELIECLPATLMQRHSCHVWQKFFETRRKSLVDGIFDHFNKKMQGKWLQVSVSEMGSLVVQTIFENCKEKDKRTCLDEIINNMDQIICGQWGNWVIQHIIEHGSEPDKQRILNSLLKEVESYSTNRYASKVVERALRVCHVTFFDRYVKEITTPQNELPTIFLQEIASNQYGNYIVQYLLQVATPSQINLMAEHLKKHMVSLRGHKYGQRIAALVEKSKS</sequence>